<comment type="function">
    <text evidence="1">Required for accurate and efficient protein synthesis under certain stress conditions. May act as a fidelity factor of the translation reaction, by catalyzing a one-codon backward translocation of tRNAs on improperly translocated ribosomes. Back-translocation proceeds from a post-translocation (POST) complex to a pre-translocation (PRE) complex, thus giving elongation factor G a second chance to translocate the tRNAs correctly. Binds to ribosomes in a GTP-dependent manner.</text>
</comment>
<comment type="catalytic activity">
    <reaction evidence="1">
        <text>GTP + H2O = GDP + phosphate + H(+)</text>
        <dbReference type="Rhea" id="RHEA:19669"/>
        <dbReference type="ChEBI" id="CHEBI:15377"/>
        <dbReference type="ChEBI" id="CHEBI:15378"/>
        <dbReference type="ChEBI" id="CHEBI:37565"/>
        <dbReference type="ChEBI" id="CHEBI:43474"/>
        <dbReference type="ChEBI" id="CHEBI:58189"/>
        <dbReference type="EC" id="3.6.5.n1"/>
    </reaction>
</comment>
<comment type="subcellular location">
    <subcellularLocation>
        <location evidence="1">Cell inner membrane</location>
        <topology evidence="1">Peripheral membrane protein</topology>
        <orientation evidence="1">Cytoplasmic side</orientation>
    </subcellularLocation>
</comment>
<comment type="similarity">
    <text evidence="1">Belongs to the TRAFAC class translation factor GTPase superfamily. Classic translation factor GTPase family. LepA subfamily.</text>
</comment>
<proteinExistence type="inferred from homology"/>
<evidence type="ECO:0000255" key="1">
    <source>
        <dbReference type="HAMAP-Rule" id="MF_00071"/>
    </source>
</evidence>
<feature type="chain" id="PRO_1000057471" description="Elongation factor 4">
    <location>
        <begin position="1"/>
        <end position="596"/>
    </location>
</feature>
<feature type="domain" description="tr-type G">
    <location>
        <begin position="2"/>
        <end position="183"/>
    </location>
</feature>
<feature type="binding site" evidence="1">
    <location>
        <begin position="14"/>
        <end position="19"/>
    </location>
    <ligand>
        <name>GTP</name>
        <dbReference type="ChEBI" id="CHEBI:37565"/>
    </ligand>
</feature>
<feature type="binding site" evidence="1">
    <location>
        <begin position="130"/>
        <end position="133"/>
    </location>
    <ligand>
        <name>GTP</name>
        <dbReference type="ChEBI" id="CHEBI:37565"/>
    </ligand>
</feature>
<accession>A7GZW3</accession>
<protein>
    <recommendedName>
        <fullName evidence="1">Elongation factor 4</fullName>
        <shortName evidence="1">EF-4</shortName>
        <ecNumber evidence="1">3.6.5.n1</ecNumber>
    </recommendedName>
    <alternativeName>
        <fullName evidence="1">Ribosomal back-translocase LepA</fullName>
    </alternativeName>
</protein>
<sequence>MKNIRNFSIIAHIDHGKSTLADRLIQECGAVSSREMSSQIMDTMDIEKERGITIKAQSVRLNYTLDGQNFVLNLIDTPGHVDFSYEVSRSLASCEGALLVVDASQGVEAQTIANVYIALENNLEIIPVINKIDLPAADPQRVKDEIEHVIGLDCSGAIEVSAKTGAGINELLEAIVRRVPAPDANDALPTKALIYDSWFDNYLGALALVRIYDGEIKKNDEVLVMGTNKKHIVLDLMYPHPIAPIKTARIGTGEVGIIVLGLKNVSDVQVGDTITLAKNPTKEPVGGFERAKPFVFAGIYPIETDKFEDLRDALDKLKLNDSSISYEPETSIALGFGFRVGFLGLLHMEVIKERLEREFDLDLIATAPTVTYEVVQTDGQILRIQNPSQLPAVNKIEMIKEPYVRSTIITPTEFLGNIITLLNNRRGVQTKMDYITPERVLLEYDIPMNEIVMDFYDKLKSSTKGYASFDYEPSDYREGDLVKLDIKVAGETVDALSIIVPESKAQSKGRDFVKAMKEIVPRQLFEVAIQASIGNKIIARETVKSMGKNVTAKCYGGDITRKRKLLEKQKEGKKRMKAIGKVNLPQEAFLSVLKID</sequence>
<keyword id="KW-0997">Cell inner membrane</keyword>
<keyword id="KW-1003">Cell membrane</keyword>
<keyword id="KW-0342">GTP-binding</keyword>
<keyword id="KW-0378">Hydrolase</keyword>
<keyword id="KW-0472">Membrane</keyword>
<keyword id="KW-0547">Nucleotide-binding</keyword>
<keyword id="KW-0648">Protein biosynthesis</keyword>
<keyword id="KW-1185">Reference proteome</keyword>
<name>LEPA_CAMC5</name>
<gene>
    <name evidence="1" type="primary">lepA</name>
    <name type="ordered locus">Ccur92_14510</name>
    <name type="ORF">CCV52592_1454</name>
</gene>
<organism>
    <name type="scientific">Campylobacter curvus (strain 525.92)</name>
    <dbReference type="NCBI Taxonomy" id="360105"/>
    <lineage>
        <taxon>Bacteria</taxon>
        <taxon>Pseudomonadati</taxon>
        <taxon>Campylobacterota</taxon>
        <taxon>Epsilonproteobacteria</taxon>
        <taxon>Campylobacterales</taxon>
        <taxon>Campylobacteraceae</taxon>
        <taxon>Campylobacter</taxon>
    </lineage>
</organism>
<reference key="1">
    <citation type="submission" date="2007-07" db="EMBL/GenBank/DDBJ databases">
        <title>Genome sequence of Campylobacter curvus 525.92 isolated from human feces.</title>
        <authorList>
            <person name="Fouts D.E."/>
            <person name="Mongodin E.F."/>
            <person name="Puiu D."/>
            <person name="Sebastian Y."/>
            <person name="Miller W.G."/>
            <person name="Mandrell R.E."/>
            <person name="Lastovica A.J."/>
            <person name="Nelson K.E."/>
        </authorList>
    </citation>
    <scope>NUCLEOTIDE SEQUENCE [LARGE SCALE GENOMIC DNA]</scope>
    <source>
        <strain>525.92</strain>
    </source>
</reference>
<dbReference type="EC" id="3.6.5.n1" evidence="1"/>
<dbReference type="EMBL" id="CP000767">
    <property type="protein sequence ID" value="EAT99970.1"/>
    <property type="molecule type" value="Genomic_DNA"/>
</dbReference>
<dbReference type="RefSeq" id="WP_011992605.1">
    <property type="nucleotide sequence ID" value="NC_009715.2"/>
</dbReference>
<dbReference type="SMR" id="A7GZW3"/>
<dbReference type="STRING" id="360105.CCV52592_1454"/>
<dbReference type="KEGG" id="ccv:CCV52592_1454"/>
<dbReference type="HOGENOM" id="CLU_009995_3_3_7"/>
<dbReference type="OrthoDB" id="9801472at2"/>
<dbReference type="Proteomes" id="UP000006380">
    <property type="component" value="Chromosome"/>
</dbReference>
<dbReference type="GO" id="GO:0005886">
    <property type="term" value="C:plasma membrane"/>
    <property type="evidence" value="ECO:0007669"/>
    <property type="project" value="UniProtKB-SubCell"/>
</dbReference>
<dbReference type="GO" id="GO:0005525">
    <property type="term" value="F:GTP binding"/>
    <property type="evidence" value="ECO:0007669"/>
    <property type="project" value="UniProtKB-UniRule"/>
</dbReference>
<dbReference type="GO" id="GO:0003924">
    <property type="term" value="F:GTPase activity"/>
    <property type="evidence" value="ECO:0007669"/>
    <property type="project" value="UniProtKB-UniRule"/>
</dbReference>
<dbReference type="GO" id="GO:0043022">
    <property type="term" value="F:ribosome binding"/>
    <property type="evidence" value="ECO:0007669"/>
    <property type="project" value="UniProtKB-UniRule"/>
</dbReference>
<dbReference type="GO" id="GO:0003746">
    <property type="term" value="F:translation elongation factor activity"/>
    <property type="evidence" value="ECO:0007669"/>
    <property type="project" value="UniProtKB-UniRule"/>
</dbReference>
<dbReference type="GO" id="GO:0045727">
    <property type="term" value="P:positive regulation of translation"/>
    <property type="evidence" value="ECO:0007669"/>
    <property type="project" value="UniProtKB-UniRule"/>
</dbReference>
<dbReference type="CDD" id="cd03699">
    <property type="entry name" value="EF4_II"/>
    <property type="match status" value="1"/>
</dbReference>
<dbReference type="CDD" id="cd16260">
    <property type="entry name" value="EF4_III"/>
    <property type="match status" value="1"/>
</dbReference>
<dbReference type="CDD" id="cd01890">
    <property type="entry name" value="LepA"/>
    <property type="match status" value="1"/>
</dbReference>
<dbReference type="CDD" id="cd03709">
    <property type="entry name" value="lepA_C"/>
    <property type="match status" value="1"/>
</dbReference>
<dbReference type="FunFam" id="3.40.50.300:FF:000078">
    <property type="entry name" value="Elongation factor 4"/>
    <property type="match status" value="1"/>
</dbReference>
<dbReference type="FunFam" id="2.40.30.10:FF:000015">
    <property type="entry name" value="Translation factor GUF1, mitochondrial"/>
    <property type="match status" value="1"/>
</dbReference>
<dbReference type="FunFam" id="3.30.70.240:FF:000007">
    <property type="entry name" value="Translation factor GUF1, mitochondrial"/>
    <property type="match status" value="1"/>
</dbReference>
<dbReference type="FunFam" id="3.30.70.2570:FF:000001">
    <property type="entry name" value="Translation factor GUF1, mitochondrial"/>
    <property type="match status" value="1"/>
</dbReference>
<dbReference type="FunFam" id="3.30.70.870:FF:000004">
    <property type="entry name" value="Translation factor GUF1, mitochondrial"/>
    <property type="match status" value="1"/>
</dbReference>
<dbReference type="Gene3D" id="3.30.70.240">
    <property type="match status" value="1"/>
</dbReference>
<dbReference type="Gene3D" id="3.30.70.2570">
    <property type="entry name" value="Elongation factor 4, C-terminal domain"/>
    <property type="match status" value="1"/>
</dbReference>
<dbReference type="Gene3D" id="3.30.70.870">
    <property type="entry name" value="Elongation Factor G (Translational Gtpase), domain 3"/>
    <property type="match status" value="1"/>
</dbReference>
<dbReference type="Gene3D" id="3.40.50.300">
    <property type="entry name" value="P-loop containing nucleotide triphosphate hydrolases"/>
    <property type="match status" value="1"/>
</dbReference>
<dbReference type="Gene3D" id="2.40.30.10">
    <property type="entry name" value="Translation factors"/>
    <property type="match status" value="1"/>
</dbReference>
<dbReference type="HAMAP" id="MF_00071">
    <property type="entry name" value="LepA"/>
    <property type="match status" value="1"/>
</dbReference>
<dbReference type="InterPro" id="IPR006297">
    <property type="entry name" value="EF-4"/>
</dbReference>
<dbReference type="InterPro" id="IPR035647">
    <property type="entry name" value="EFG_III/V"/>
</dbReference>
<dbReference type="InterPro" id="IPR000640">
    <property type="entry name" value="EFG_V-like"/>
</dbReference>
<dbReference type="InterPro" id="IPR004161">
    <property type="entry name" value="EFTu-like_2"/>
</dbReference>
<dbReference type="InterPro" id="IPR031157">
    <property type="entry name" value="G_TR_CS"/>
</dbReference>
<dbReference type="InterPro" id="IPR038363">
    <property type="entry name" value="LepA_C_sf"/>
</dbReference>
<dbReference type="InterPro" id="IPR013842">
    <property type="entry name" value="LepA_CTD"/>
</dbReference>
<dbReference type="InterPro" id="IPR035654">
    <property type="entry name" value="LepA_IV"/>
</dbReference>
<dbReference type="InterPro" id="IPR027417">
    <property type="entry name" value="P-loop_NTPase"/>
</dbReference>
<dbReference type="InterPro" id="IPR005225">
    <property type="entry name" value="Small_GTP-bd"/>
</dbReference>
<dbReference type="InterPro" id="IPR000795">
    <property type="entry name" value="T_Tr_GTP-bd_dom"/>
</dbReference>
<dbReference type="NCBIfam" id="TIGR01393">
    <property type="entry name" value="lepA"/>
    <property type="match status" value="1"/>
</dbReference>
<dbReference type="NCBIfam" id="TIGR00231">
    <property type="entry name" value="small_GTP"/>
    <property type="match status" value="1"/>
</dbReference>
<dbReference type="PANTHER" id="PTHR43512:SF4">
    <property type="entry name" value="TRANSLATION FACTOR GUF1 HOMOLOG, CHLOROPLASTIC"/>
    <property type="match status" value="1"/>
</dbReference>
<dbReference type="PANTHER" id="PTHR43512">
    <property type="entry name" value="TRANSLATION FACTOR GUF1-RELATED"/>
    <property type="match status" value="1"/>
</dbReference>
<dbReference type="Pfam" id="PF00679">
    <property type="entry name" value="EFG_C"/>
    <property type="match status" value="1"/>
</dbReference>
<dbReference type="Pfam" id="PF00009">
    <property type="entry name" value="GTP_EFTU"/>
    <property type="match status" value="1"/>
</dbReference>
<dbReference type="Pfam" id="PF03144">
    <property type="entry name" value="GTP_EFTU_D2"/>
    <property type="match status" value="1"/>
</dbReference>
<dbReference type="Pfam" id="PF06421">
    <property type="entry name" value="LepA_C"/>
    <property type="match status" value="1"/>
</dbReference>
<dbReference type="PRINTS" id="PR00315">
    <property type="entry name" value="ELONGATNFCT"/>
</dbReference>
<dbReference type="SMART" id="SM00838">
    <property type="entry name" value="EFG_C"/>
    <property type="match status" value="1"/>
</dbReference>
<dbReference type="SUPFAM" id="SSF54980">
    <property type="entry name" value="EF-G C-terminal domain-like"/>
    <property type="match status" value="2"/>
</dbReference>
<dbReference type="SUPFAM" id="SSF52540">
    <property type="entry name" value="P-loop containing nucleoside triphosphate hydrolases"/>
    <property type="match status" value="1"/>
</dbReference>
<dbReference type="PROSITE" id="PS00301">
    <property type="entry name" value="G_TR_1"/>
    <property type="match status" value="1"/>
</dbReference>
<dbReference type="PROSITE" id="PS51722">
    <property type="entry name" value="G_TR_2"/>
    <property type="match status" value="1"/>
</dbReference>